<keyword id="KW-0028">Amino-acid biosynthesis</keyword>
<keyword id="KW-0963">Cytoplasm</keyword>
<keyword id="KW-0315">Glutamine amidotransferase</keyword>
<keyword id="KW-0368">Histidine biosynthesis</keyword>
<keyword id="KW-0378">Hydrolase</keyword>
<keyword id="KW-0456">Lyase</keyword>
<keyword id="KW-1185">Reference proteome</keyword>
<organism>
    <name type="scientific">Haemophilus influenzae (strain ATCC 51907 / DSM 11121 / KW20 / Rd)</name>
    <dbReference type="NCBI Taxonomy" id="71421"/>
    <lineage>
        <taxon>Bacteria</taxon>
        <taxon>Pseudomonadati</taxon>
        <taxon>Pseudomonadota</taxon>
        <taxon>Gammaproteobacteria</taxon>
        <taxon>Pasteurellales</taxon>
        <taxon>Pasteurellaceae</taxon>
        <taxon>Haemophilus</taxon>
    </lineage>
</organism>
<proteinExistence type="inferred from homology"/>
<dbReference type="EC" id="4.3.2.10"/>
<dbReference type="EC" id="3.5.1.2"/>
<dbReference type="EMBL" id="L42023">
    <property type="protein sequence ID" value="AAC22131.1"/>
    <property type="molecule type" value="Genomic_DNA"/>
</dbReference>
<dbReference type="PIR" id="G64070">
    <property type="entry name" value="G64070"/>
</dbReference>
<dbReference type="RefSeq" id="NP_438633.1">
    <property type="nucleotide sequence ID" value="NC_000907.1"/>
</dbReference>
<dbReference type="SMR" id="P44340"/>
<dbReference type="STRING" id="71421.HI_0472"/>
<dbReference type="EnsemblBacteria" id="AAC22131">
    <property type="protein sequence ID" value="AAC22131"/>
    <property type="gene ID" value="HI_0472"/>
</dbReference>
<dbReference type="KEGG" id="hin:HI_0472"/>
<dbReference type="PATRIC" id="fig|71421.8.peg.492"/>
<dbReference type="eggNOG" id="COG0118">
    <property type="taxonomic scope" value="Bacteria"/>
</dbReference>
<dbReference type="HOGENOM" id="CLU_071837_0_0_6"/>
<dbReference type="OrthoDB" id="9807137at2"/>
<dbReference type="PhylomeDB" id="P44340"/>
<dbReference type="BioCyc" id="HINF71421:G1GJ1-488-MONOMER"/>
<dbReference type="UniPathway" id="UPA00031">
    <property type="reaction ID" value="UER00010"/>
</dbReference>
<dbReference type="Proteomes" id="UP000000579">
    <property type="component" value="Chromosome"/>
</dbReference>
<dbReference type="GO" id="GO:0005737">
    <property type="term" value="C:cytoplasm"/>
    <property type="evidence" value="ECO:0007669"/>
    <property type="project" value="UniProtKB-SubCell"/>
</dbReference>
<dbReference type="GO" id="GO:0004359">
    <property type="term" value="F:glutaminase activity"/>
    <property type="evidence" value="ECO:0007669"/>
    <property type="project" value="UniProtKB-EC"/>
</dbReference>
<dbReference type="GO" id="GO:0000107">
    <property type="term" value="F:imidazoleglycerol-phosphate synthase activity"/>
    <property type="evidence" value="ECO:0000318"/>
    <property type="project" value="GO_Central"/>
</dbReference>
<dbReference type="GO" id="GO:0016829">
    <property type="term" value="F:lyase activity"/>
    <property type="evidence" value="ECO:0007669"/>
    <property type="project" value="UniProtKB-KW"/>
</dbReference>
<dbReference type="GO" id="GO:0000105">
    <property type="term" value="P:L-histidine biosynthetic process"/>
    <property type="evidence" value="ECO:0007669"/>
    <property type="project" value="UniProtKB-UniRule"/>
</dbReference>
<dbReference type="CDD" id="cd01748">
    <property type="entry name" value="GATase1_IGP_Synthase"/>
    <property type="match status" value="1"/>
</dbReference>
<dbReference type="FunFam" id="3.40.50.880:FF:000009">
    <property type="entry name" value="Imidazole glycerol phosphate synthase subunit HisH"/>
    <property type="match status" value="1"/>
</dbReference>
<dbReference type="Gene3D" id="3.40.50.880">
    <property type="match status" value="1"/>
</dbReference>
<dbReference type="HAMAP" id="MF_00278">
    <property type="entry name" value="HisH"/>
    <property type="match status" value="1"/>
</dbReference>
<dbReference type="InterPro" id="IPR029062">
    <property type="entry name" value="Class_I_gatase-like"/>
</dbReference>
<dbReference type="InterPro" id="IPR017926">
    <property type="entry name" value="GATASE"/>
</dbReference>
<dbReference type="InterPro" id="IPR010139">
    <property type="entry name" value="Imidazole-glycPsynth_HisH"/>
</dbReference>
<dbReference type="NCBIfam" id="TIGR01855">
    <property type="entry name" value="IMP_synth_hisH"/>
    <property type="match status" value="1"/>
</dbReference>
<dbReference type="PANTHER" id="PTHR42701">
    <property type="entry name" value="IMIDAZOLE GLYCEROL PHOSPHATE SYNTHASE SUBUNIT HISH"/>
    <property type="match status" value="1"/>
</dbReference>
<dbReference type="PANTHER" id="PTHR42701:SF1">
    <property type="entry name" value="IMIDAZOLE GLYCEROL PHOSPHATE SYNTHASE SUBUNIT HISH"/>
    <property type="match status" value="1"/>
</dbReference>
<dbReference type="Pfam" id="PF00117">
    <property type="entry name" value="GATase"/>
    <property type="match status" value="1"/>
</dbReference>
<dbReference type="PIRSF" id="PIRSF000495">
    <property type="entry name" value="Amidotransf_hisH"/>
    <property type="match status" value="1"/>
</dbReference>
<dbReference type="PRINTS" id="PR00097">
    <property type="entry name" value="ANTSNTHASEII"/>
</dbReference>
<dbReference type="SUPFAM" id="SSF52317">
    <property type="entry name" value="Class I glutamine amidotransferase-like"/>
    <property type="match status" value="1"/>
</dbReference>
<dbReference type="PROSITE" id="PS51273">
    <property type="entry name" value="GATASE_TYPE_1"/>
    <property type="match status" value="1"/>
</dbReference>
<reference key="1">
    <citation type="journal article" date="1995" name="Science">
        <title>Whole-genome random sequencing and assembly of Haemophilus influenzae Rd.</title>
        <authorList>
            <person name="Fleischmann R.D."/>
            <person name="Adams M.D."/>
            <person name="White O."/>
            <person name="Clayton R.A."/>
            <person name="Kirkness E.F."/>
            <person name="Kerlavage A.R."/>
            <person name="Bult C.J."/>
            <person name="Tomb J.-F."/>
            <person name="Dougherty B.A."/>
            <person name="Merrick J.M."/>
            <person name="McKenney K."/>
            <person name="Sutton G.G."/>
            <person name="FitzHugh W."/>
            <person name="Fields C.A."/>
            <person name="Gocayne J.D."/>
            <person name="Scott J.D."/>
            <person name="Shirley R."/>
            <person name="Liu L.-I."/>
            <person name="Glodek A."/>
            <person name="Kelley J.M."/>
            <person name="Weidman J.F."/>
            <person name="Phillips C.A."/>
            <person name="Spriggs T."/>
            <person name="Hedblom E."/>
            <person name="Cotton M.D."/>
            <person name="Utterback T.R."/>
            <person name="Hanna M.C."/>
            <person name="Nguyen D.T."/>
            <person name="Saudek D.M."/>
            <person name="Brandon R.C."/>
            <person name="Fine L.D."/>
            <person name="Fritchman J.L."/>
            <person name="Fuhrmann J.L."/>
            <person name="Geoghagen N.S.M."/>
            <person name="Gnehm C.L."/>
            <person name="McDonald L.A."/>
            <person name="Small K.V."/>
            <person name="Fraser C.M."/>
            <person name="Smith H.O."/>
            <person name="Venter J.C."/>
        </authorList>
    </citation>
    <scope>NUCLEOTIDE SEQUENCE [LARGE SCALE GENOMIC DNA]</scope>
    <source>
        <strain>ATCC 51907 / DSM 11121 / KW20 / Rd</strain>
    </source>
</reference>
<sequence>MINITIIDTGCANLSSVKFAFDRLGYNTEITFDLNKIKSADKLILPGVGTANAAMYNLQERQLIETIQNLTQPVLGICLGMQLMTEFSEEGNVPTLNLISGKTNRIPDTGLPLPQMGWNRVQFVKNCPLFDGIVQNSHFYFVHSYAVSPNEHSVAISNYGVNFSAAIAKENFYGVQFHPERSGKNGALLLKNFVEKVPF</sequence>
<evidence type="ECO:0000250" key="1"/>
<comment type="function">
    <text evidence="1">IGPS catalyzes the conversion of PRFAR and glutamine to IGP, AICAR and glutamate. The HisH subunit catalyzes the hydrolysis of glutamine to glutamate and ammonia as part of the synthesis of IGP and AICAR. The resulting ammonia molecule is channeled to the active site of HisF (By similarity).</text>
</comment>
<comment type="catalytic activity">
    <reaction>
        <text>5-[(5-phospho-1-deoxy-D-ribulos-1-ylimino)methylamino]-1-(5-phospho-beta-D-ribosyl)imidazole-4-carboxamide + L-glutamine = D-erythro-1-(imidazol-4-yl)glycerol 3-phosphate + 5-amino-1-(5-phospho-beta-D-ribosyl)imidazole-4-carboxamide + L-glutamate + H(+)</text>
        <dbReference type="Rhea" id="RHEA:24793"/>
        <dbReference type="ChEBI" id="CHEBI:15378"/>
        <dbReference type="ChEBI" id="CHEBI:29985"/>
        <dbReference type="ChEBI" id="CHEBI:58278"/>
        <dbReference type="ChEBI" id="CHEBI:58359"/>
        <dbReference type="ChEBI" id="CHEBI:58475"/>
        <dbReference type="ChEBI" id="CHEBI:58525"/>
        <dbReference type="EC" id="4.3.2.10"/>
    </reaction>
</comment>
<comment type="catalytic activity">
    <reaction>
        <text>L-glutamine + H2O = L-glutamate + NH4(+)</text>
        <dbReference type="Rhea" id="RHEA:15889"/>
        <dbReference type="ChEBI" id="CHEBI:15377"/>
        <dbReference type="ChEBI" id="CHEBI:28938"/>
        <dbReference type="ChEBI" id="CHEBI:29985"/>
        <dbReference type="ChEBI" id="CHEBI:58359"/>
        <dbReference type="EC" id="3.5.1.2"/>
    </reaction>
</comment>
<comment type="pathway">
    <text>Amino-acid biosynthesis; L-histidine biosynthesis; L-histidine from 5-phospho-alpha-D-ribose 1-diphosphate: step 5/9.</text>
</comment>
<comment type="subunit">
    <text evidence="1">Heterodimer of HisH and HisF.</text>
</comment>
<comment type="subcellular location">
    <subcellularLocation>
        <location evidence="1">Cytoplasm</location>
    </subcellularLocation>
</comment>
<name>HIS5_HAEIN</name>
<accession>P44340</accession>
<gene>
    <name type="primary">hisH</name>
    <name type="ordered locus">HI_0472</name>
</gene>
<feature type="chain" id="PRO_0000152379" description="Imidazole glycerol phosphate synthase subunit HisH">
    <location>
        <begin position="1"/>
        <end position="199"/>
    </location>
</feature>
<feature type="domain" description="Glutamine amidotransferase type-1">
    <location>
        <begin position="3"/>
        <end position="199"/>
    </location>
</feature>
<feature type="active site" description="Nucleophile" evidence="1">
    <location>
        <position position="78"/>
    </location>
</feature>
<feature type="active site" evidence="1">
    <location>
        <position position="178"/>
    </location>
</feature>
<feature type="active site" evidence="1">
    <location>
        <position position="180"/>
    </location>
</feature>
<protein>
    <recommendedName>
        <fullName>Imidazole glycerol phosphate synthase subunit HisH</fullName>
        <ecNumber>4.3.2.10</ecNumber>
    </recommendedName>
    <alternativeName>
        <fullName>IGP synthase glutaminase subunit</fullName>
        <ecNumber>3.5.1.2</ecNumber>
    </alternativeName>
    <alternativeName>
        <fullName>IGP synthase subunit HisH</fullName>
    </alternativeName>
    <alternativeName>
        <fullName>ImGP synthase subunit HisH</fullName>
        <shortName>IGPS subunit HisH</shortName>
    </alternativeName>
</protein>